<protein>
    <recommendedName>
        <fullName evidence="1">NADPH-dependent 7-cyano-7-deazaguanine reductase</fullName>
        <ecNumber evidence="1">1.7.1.13</ecNumber>
    </recommendedName>
    <alternativeName>
        <fullName evidence="1">7-cyano-7-carbaguanine reductase</fullName>
    </alternativeName>
    <alternativeName>
        <fullName evidence="1">NADPH-dependent nitrile oxidoreductase</fullName>
    </alternativeName>
    <alternativeName>
        <fullName evidence="1">PreQ(0) reductase</fullName>
    </alternativeName>
</protein>
<dbReference type="EC" id="1.7.1.13" evidence="1"/>
<dbReference type="EMBL" id="CP000282">
    <property type="protein sequence ID" value="ABD80434.1"/>
    <property type="molecule type" value="Genomic_DNA"/>
</dbReference>
<dbReference type="RefSeq" id="WP_011467654.1">
    <property type="nucleotide sequence ID" value="NC_007912.1"/>
</dbReference>
<dbReference type="SMR" id="Q21LJ5"/>
<dbReference type="STRING" id="203122.Sde_1172"/>
<dbReference type="GeneID" id="98612850"/>
<dbReference type="KEGG" id="sde:Sde_1172"/>
<dbReference type="eggNOG" id="COG0780">
    <property type="taxonomic scope" value="Bacteria"/>
</dbReference>
<dbReference type="eggNOG" id="COG2904">
    <property type="taxonomic scope" value="Bacteria"/>
</dbReference>
<dbReference type="HOGENOM" id="CLU_054738_0_0_6"/>
<dbReference type="OrthoDB" id="9789995at2"/>
<dbReference type="UniPathway" id="UPA00392"/>
<dbReference type="Proteomes" id="UP000001947">
    <property type="component" value="Chromosome"/>
</dbReference>
<dbReference type="GO" id="GO:0005737">
    <property type="term" value="C:cytoplasm"/>
    <property type="evidence" value="ECO:0007669"/>
    <property type="project" value="UniProtKB-SubCell"/>
</dbReference>
<dbReference type="GO" id="GO:0033739">
    <property type="term" value="F:preQ1 synthase activity"/>
    <property type="evidence" value="ECO:0007669"/>
    <property type="project" value="UniProtKB-UniRule"/>
</dbReference>
<dbReference type="GO" id="GO:0008616">
    <property type="term" value="P:queuosine biosynthetic process"/>
    <property type="evidence" value="ECO:0007669"/>
    <property type="project" value="UniProtKB-UniRule"/>
</dbReference>
<dbReference type="GO" id="GO:0006400">
    <property type="term" value="P:tRNA modification"/>
    <property type="evidence" value="ECO:0007669"/>
    <property type="project" value="UniProtKB-UniRule"/>
</dbReference>
<dbReference type="Gene3D" id="3.30.1130.10">
    <property type="match status" value="2"/>
</dbReference>
<dbReference type="HAMAP" id="MF_00817">
    <property type="entry name" value="QueF_type2"/>
    <property type="match status" value="1"/>
</dbReference>
<dbReference type="InterPro" id="IPR043133">
    <property type="entry name" value="GTP-CH-I_C/QueF"/>
</dbReference>
<dbReference type="InterPro" id="IPR050084">
    <property type="entry name" value="NADPH_dep_7-cyano-7-deazaG_red"/>
</dbReference>
<dbReference type="InterPro" id="IPR029500">
    <property type="entry name" value="QueF"/>
</dbReference>
<dbReference type="InterPro" id="IPR029139">
    <property type="entry name" value="QueF_N"/>
</dbReference>
<dbReference type="InterPro" id="IPR016428">
    <property type="entry name" value="QueF_type2"/>
</dbReference>
<dbReference type="NCBIfam" id="TIGR03138">
    <property type="entry name" value="QueF"/>
    <property type="match status" value="1"/>
</dbReference>
<dbReference type="PANTHER" id="PTHR34354">
    <property type="entry name" value="NADPH-DEPENDENT 7-CYANO-7-DEAZAGUANINE REDUCTASE"/>
    <property type="match status" value="1"/>
</dbReference>
<dbReference type="PANTHER" id="PTHR34354:SF1">
    <property type="entry name" value="NADPH-DEPENDENT 7-CYANO-7-DEAZAGUANINE REDUCTASE"/>
    <property type="match status" value="1"/>
</dbReference>
<dbReference type="Pfam" id="PF14489">
    <property type="entry name" value="QueF"/>
    <property type="match status" value="1"/>
</dbReference>
<dbReference type="Pfam" id="PF14819">
    <property type="entry name" value="QueF_N"/>
    <property type="match status" value="1"/>
</dbReference>
<dbReference type="PIRSF" id="PIRSF004750">
    <property type="entry name" value="Nitrile_oxidored_YqcD_prd"/>
    <property type="match status" value="1"/>
</dbReference>
<dbReference type="SUPFAM" id="SSF55620">
    <property type="entry name" value="Tetrahydrobiopterin biosynthesis enzymes-like"/>
    <property type="match status" value="1"/>
</dbReference>
<gene>
    <name evidence="1" type="primary">queF</name>
    <name type="ordered locus">Sde_1172</name>
</gene>
<reference key="1">
    <citation type="journal article" date="2008" name="PLoS Genet.">
        <title>Complete genome sequence of the complex carbohydrate-degrading marine bacterium, Saccharophagus degradans strain 2-40 T.</title>
        <authorList>
            <person name="Weiner R.M."/>
            <person name="Taylor L.E. II"/>
            <person name="Henrissat B."/>
            <person name="Hauser L."/>
            <person name="Land M."/>
            <person name="Coutinho P.M."/>
            <person name="Rancurel C."/>
            <person name="Saunders E.H."/>
            <person name="Longmire A.G."/>
            <person name="Zhang H."/>
            <person name="Bayer E.A."/>
            <person name="Gilbert H.J."/>
            <person name="Larimer F."/>
            <person name="Zhulin I.B."/>
            <person name="Ekborg N.A."/>
            <person name="Lamed R."/>
            <person name="Richardson P.M."/>
            <person name="Borovok I."/>
            <person name="Hutcheson S."/>
        </authorList>
    </citation>
    <scope>NUCLEOTIDE SEQUENCE [LARGE SCALE GENOMIC DNA]</scope>
    <source>
        <strain>2-40 / ATCC 43961 / DSM 17024</strain>
    </source>
</reference>
<accession>Q21LJ5</accession>
<name>QUEF_SACD2</name>
<organism>
    <name type="scientific">Saccharophagus degradans (strain 2-40 / ATCC 43961 / DSM 17024)</name>
    <dbReference type="NCBI Taxonomy" id="203122"/>
    <lineage>
        <taxon>Bacteria</taxon>
        <taxon>Pseudomonadati</taxon>
        <taxon>Pseudomonadota</taxon>
        <taxon>Gammaproteobacteria</taxon>
        <taxon>Cellvibrionales</taxon>
        <taxon>Cellvibrionaceae</taxon>
        <taxon>Saccharophagus</taxon>
    </lineage>
</organism>
<feature type="chain" id="PRO_0000247718" description="NADPH-dependent 7-cyano-7-deazaguanine reductase">
    <location>
        <begin position="1"/>
        <end position="268"/>
    </location>
</feature>
<feature type="active site" description="Thioimide intermediate" evidence="1">
    <location>
        <position position="176"/>
    </location>
</feature>
<feature type="active site" description="Proton donor" evidence="1">
    <location>
        <position position="183"/>
    </location>
</feature>
<feature type="binding site" evidence="1">
    <location>
        <begin position="79"/>
        <end position="81"/>
    </location>
    <ligand>
        <name>substrate</name>
    </ligand>
</feature>
<feature type="binding site" evidence="1">
    <location>
        <begin position="81"/>
        <end position="82"/>
    </location>
    <ligand>
        <name>NADPH</name>
        <dbReference type="ChEBI" id="CHEBI:57783"/>
    </ligand>
</feature>
<feature type="binding site" evidence="1">
    <location>
        <begin position="215"/>
        <end position="216"/>
    </location>
    <ligand>
        <name>substrate</name>
    </ligand>
</feature>
<feature type="binding site" evidence="1">
    <location>
        <begin position="244"/>
        <end position="245"/>
    </location>
    <ligand>
        <name>NADPH</name>
        <dbReference type="ChEBI" id="CHEBI:57783"/>
    </ligand>
</feature>
<proteinExistence type="inferred from homology"/>
<evidence type="ECO:0000255" key="1">
    <source>
        <dbReference type="HAMAP-Rule" id="MF_00817"/>
    </source>
</evidence>
<keyword id="KW-0963">Cytoplasm</keyword>
<keyword id="KW-0521">NADP</keyword>
<keyword id="KW-0560">Oxidoreductase</keyword>
<keyword id="KW-0671">Queuosine biosynthesis</keyword>
<keyword id="KW-1185">Reference proteome</keyword>
<comment type="function">
    <text evidence="1">Catalyzes the NADPH-dependent reduction of 7-cyano-7-deazaguanine (preQ0) to 7-aminomethyl-7-deazaguanine (preQ1).</text>
</comment>
<comment type="catalytic activity">
    <reaction evidence="1">
        <text>7-aminomethyl-7-carbaguanine + 2 NADP(+) = 7-cyano-7-deazaguanine + 2 NADPH + 3 H(+)</text>
        <dbReference type="Rhea" id="RHEA:13409"/>
        <dbReference type="ChEBI" id="CHEBI:15378"/>
        <dbReference type="ChEBI" id="CHEBI:45075"/>
        <dbReference type="ChEBI" id="CHEBI:57783"/>
        <dbReference type="ChEBI" id="CHEBI:58349"/>
        <dbReference type="ChEBI" id="CHEBI:58703"/>
        <dbReference type="EC" id="1.7.1.13"/>
    </reaction>
</comment>
<comment type="pathway">
    <text evidence="1">tRNA modification; tRNA-queuosine biosynthesis.</text>
</comment>
<comment type="subunit">
    <text evidence="1">Homodimer.</text>
</comment>
<comment type="subcellular location">
    <subcellularLocation>
        <location evidence="1">Cytoplasm</location>
    </subcellularLocation>
</comment>
<comment type="similarity">
    <text evidence="1">Belongs to the GTP cyclohydrolase I family. QueF type 2 subfamily.</text>
</comment>
<sequence length="268" mass="29736">MSSIELGKQAEYPEQYSPDCLEPIARSLSRSGLGLNASALPFTGLDVWTGYELSWLDLSGKPQVAIGYFEFDAKTDAIVESKSFKYYLNSFNQTRFESWAAVQTLMQQDLANASGGDVNVRLEPLSAVSPLETPAGQCIDDCPLEAAVYTPDAALLKVEQGEVSEQLFSHLLKSNCPVTGQPDWATVWVSYRGNKITPESLLAYVVSYRQHQDFHENCVEKIFTDIMAQCAPVELSVYARYTRRGGLDINPFRTNCGAALPGWRIVRQ</sequence>